<organism>
    <name type="scientific">Drosophila melanogaster</name>
    <name type="common">Fruit fly</name>
    <dbReference type="NCBI Taxonomy" id="7227"/>
    <lineage>
        <taxon>Eukaryota</taxon>
        <taxon>Metazoa</taxon>
        <taxon>Ecdysozoa</taxon>
        <taxon>Arthropoda</taxon>
        <taxon>Hexapoda</taxon>
        <taxon>Insecta</taxon>
        <taxon>Pterygota</taxon>
        <taxon>Neoptera</taxon>
        <taxon>Endopterygota</taxon>
        <taxon>Diptera</taxon>
        <taxon>Brachycera</taxon>
        <taxon>Muscomorpha</taxon>
        <taxon>Ephydroidea</taxon>
        <taxon>Drosophilidae</taxon>
        <taxon>Drosophila</taxon>
        <taxon>Sophophora</taxon>
    </lineage>
</organism>
<protein>
    <recommendedName>
        <fullName>Acylphosphatase-1</fullName>
        <ecNumber evidence="4">3.6.1.7</ecNumber>
    </recommendedName>
    <alternativeName>
        <fullName>Acylphosphate phosphohydrolase 1</fullName>
        <shortName>AcPDro</shortName>
    </alternativeName>
</protein>
<name>ACYP1_DROME</name>
<comment type="catalytic activity">
    <reaction evidence="4">
        <text>an acyl phosphate + H2O = a carboxylate + phosphate + H(+)</text>
        <dbReference type="Rhea" id="RHEA:14965"/>
        <dbReference type="ChEBI" id="CHEBI:15377"/>
        <dbReference type="ChEBI" id="CHEBI:15378"/>
        <dbReference type="ChEBI" id="CHEBI:29067"/>
        <dbReference type="ChEBI" id="CHEBI:43474"/>
        <dbReference type="ChEBI" id="CHEBI:59918"/>
        <dbReference type="EC" id="3.6.1.7"/>
    </reaction>
</comment>
<comment type="biophysicochemical properties">
    <phDependence>
        <text evidence="4">Optimum pH is 5.3-6.3.</text>
    </phDependence>
</comment>
<comment type="interaction">
    <interactant intactId="EBI-125011">
        <id>P56544</id>
    </interactant>
    <interactant intactId="EBI-172862">
        <id>Q9VMT4</id>
        <label>Dmel\CG7742</label>
    </interactant>
    <organismsDiffer>false</organismsDiffer>
    <experiments>3</experiments>
</comment>
<comment type="subcellular location">
    <subcellularLocation>
        <location evidence="5">Cytoplasm</location>
    </subcellularLocation>
</comment>
<comment type="similarity">
    <text evidence="5">Belongs to the acylphosphatase family.</text>
</comment>
<accession>P56544</accession>
<accession>Q9V3K1</accession>
<keyword id="KW-0007">Acetylation</keyword>
<keyword id="KW-0963">Cytoplasm</keyword>
<keyword id="KW-0378">Hydrolase</keyword>
<keyword id="KW-1185">Reference proteome</keyword>
<reference key="1">
    <citation type="journal article" date="1998" name="FEBS Lett.">
        <title>Drosophila melanogaster acylphosphatase: a common ancestor for acylphosphatase isoenzymes of vertebrate species.</title>
        <authorList>
            <person name="Pieri A."/>
            <person name="Magherini F."/>
            <person name="Liguri G."/>
            <person name="Raugei G."/>
            <person name="Taddei N."/>
            <person name="Bozzetti M.P."/>
            <person name="Cecchi C."/>
            <person name="Ramponi G."/>
        </authorList>
    </citation>
    <scope>NUCLEOTIDE SEQUENCE [MRNA]</scope>
    <scope>CATALYTIC ACTIVITY</scope>
    <scope>BIOPHYSICOCHEMICAL PROPERTIES</scope>
</reference>
<reference key="2">
    <citation type="journal article" date="1999" name="Genetics">
        <title>An exploration of the sequence of a 2.9-Mb region of the genome of Drosophila melanogaster: the Adh region.</title>
        <authorList>
            <person name="Ashburner M."/>
            <person name="Misra S."/>
            <person name="Roote J."/>
            <person name="Lewis S.E."/>
            <person name="Blazej R.G."/>
            <person name="Davis T."/>
            <person name="Doyle C."/>
            <person name="Galle R.F."/>
            <person name="George R.A."/>
            <person name="Harris N.L."/>
            <person name="Hartzell G."/>
            <person name="Harvey D.A."/>
            <person name="Hong L."/>
            <person name="Houston K.A."/>
            <person name="Hoskins R.A."/>
            <person name="Johnson G."/>
            <person name="Martin C."/>
            <person name="Moshrefi A.R."/>
            <person name="Palazzolo M."/>
            <person name="Reese M.G."/>
            <person name="Spradling A.C."/>
            <person name="Tsang G."/>
            <person name="Wan K.H."/>
            <person name="Whitelaw K."/>
            <person name="Celniker S.E."/>
            <person name="Rubin G.M."/>
        </authorList>
    </citation>
    <scope>NUCLEOTIDE SEQUENCE [LARGE SCALE GENOMIC DNA]</scope>
    <source>
        <strain>Berkeley</strain>
    </source>
</reference>
<reference key="3">
    <citation type="journal article" date="2000" name="Science">
        <title>The genome sequence of Drosophila melanogaster.</title>
        <authorList>
            <person name="Adams M.D."/>
            <person name="Celniker S.E."/>
            <person name="Holt R.A."/>
            <person name="Evans C.A."/>
            <person name="Gocayne J.D."/>
            <person name="Amanatides P.G."/>
            <person name="Scherer S.E."/>
            <person name="Li P.W."/>
            <person name="Hoskins R.A."/>
            <person name="Galle R.F."/>
            <person name="George R.A."/>
            <person name="Lewis S.E."/>
            <person name="Richards S."/>
            <person name="Ashburner M."/>
            <person name="Henderson S.N."/>
            <person name="Sutton G.G."/>
            <person name="Wortman J.R."/>
            <person name="Yandell M.D."/>
            <person name="Zhang Q."/>
            <person name="Chen L.X."/>
            <person name="Brandon R.C."/>
            <person name="Rogers Y.-H.C."/>
            <person name="Blazej R.G."/>
            <person name="Champe M."/>
            <person name="Pfeiffer B.D."/>
            <person name="Wan K.H."/>
            <person name="Doyle C."/>
            <person name="Baxter E.G."/>
            <person name="Helt G."/>
            <person name="Nelson C.R."/>
            <person name="Miklos G.L.G."/>
            <person name="Abril J.F."/>
            <person name="Agbayani A."/>
            <person name="An H.-J."/>
            <person name="Andrews-Pfannkoch C."/>
            <person name="Baldwin D."/>
            <person name="Ballew R.M."/>
            <person name="Basu A."/>
            <person name="Baxendale J."/>
            <person name="Bayraktaroglu L."/>
            <person name="Beasley E.M."/>
            <person name="Beeson K.Y."/>
            <person name="Benos P.V."/>
            <person name="Berman B.P."/>
            <person name="Bhandari D."/>
            <person name="Bolshakov S."/>
            <person name="Borkova D."/>
            <person name="Botchan M.R."/>
            <person name="Bouck J."/>
            <person name="Brokstein P."/>
            <person name="Brottier P."/>
            <person name="Burtis K.C."/>
            <person name="Busam D.A."/>
            <person name="Butler H."/>
            <person name="Cadieu E."/>
            <person name="Center A."/>
            <person name="Chandra I."/>
            <person name="Cherry J.M."/>
            <person name="Cawley S."/>
            <person name="Dahlke C."/>
            <person name="Davenport L.B."/>
            <person name="Davies P."/>
            <person name="de Pablos B."/>
            <person name="Delcher A."/>
            <person name="Deng Z."/>
            <person name="Mays A.D."/>
            <person name="Dew I."/>
            <person name="Dietz S.M."/>
            <person name="Dodson K."/>
            <person name="Doup L.E."/>
            <person name="Downes M."/>
            <person name="Dugan-Rocha S."/>
            <person name="Dunkov B.C."/>
            <person name="Dunn P."/>
            <person name="Durbin K.J."/>
            <person name="Evangelista C.C."/>
            <person name="Ferraz C."/>
            <person name="Ferriera S."/>
            <person name="Fleischmann W."/>
            <person name="Fosler C."/>
            <person name="Gabrielian A.E."/>
            <person name="Garg N.S."/>
            <person name="Gelbart W.M."/>
            <person name="Glasser K."/>
            <person name="Glodek A."/>
            <person name="Gong F."/>
            <person name="Gorrell J.H."/>
            <person name="Gu Z."/>
            <person name="Guan P."/>
            <person name="Harris M."/>
            <person name="Harris N.L."/>
            <person name="Harvey D.A."/>
            <person name="Heiman T.J."/>
            <person name="Hernandez J.R."/>
            <person name="Houck J."/>
            <person name="Hostin D."/>
            <person name="Houston K.A."/>
            <person name="Howland T.J."/>
            <person name="Wei M.-H."/>
            <person name="Ibegwam C."/>
            <person name="Jalali M."/>
            <person name="Kalush F."/>
            <person name="Karpen G.H."/>
            <person name="Ke Z."/>
            <person name="Kennison J.A."/>
            <person name="Ketchum K.A."/>
            <person name="Kimmel B.E."/>
            <person name="Kodira C.D."/>
            <person name="Kraft C.L."/>
            <person name="Kravitz S."/>
            <person name="Kulp D."/>
            <person name="Lai Z."/>
            <person name="Lasko P."/>
            <person name="Lei Y."/>
            <person name="Levitsky A.A."/>
            <person name="Li J.H."/>
            <person name="Li Z."/>
            <person name="Liang Y."/>
            <person name="Lin X."/>
            <person name="Liu X."/>
            <person name="Mattei B."/>
            <person name="McIntosh T.C."/>
            <person name="McLeod M.P."/>
            <person name="McPherson D."/>
            <person name="Merkulov G."/>
            <person name="Milshina N.V."/>
            <person name="Mobarry C."/>
            <person name="Morris J."/>
            <person name="Moshrefi A."/>
            <person name="Mount S.M."/>
            <person name="Moy M."/>
            <person name="Murphy B."/>
            <person name="Murphy L."/>
            <person name="Muzny D.M."/>
            <person name="Nelson D.L."/>
            <person name="Nelson D.R."/>
            <person name="Nelson K.A."/>
            <person name="Nixon K."/>
            <person name="Nusskern D.R."/>
            <person name="Pacleb J.M."/>
            <person name="Palazzolo M."/>
            <person name="Pittman G.S."/>
            <person name="Pan S."/>
            <person name="Pollard J."/>
            <person name="Puri V."/>
            <person name="Reese M.G."/>
            <person name="Reinert K."/>
            <person name="Remington K."/>
            <person name="Saunders R.D.C."/>
            <person name="Scheeler F."/>
            <person name="Shen H."/>
            <person name="Shue B.C."/>
            <person name="Siden-Kiamos I."/>
            <person name="Simpson M."/>
            <person name="Skupski M.P."/>
            <person name="Smith T.J."/>
            <person name="Spier E."/>
            <person name="Spradling A.C."/>
            <person name="Stapleton M."/>
            <person name="Strong R."/>
            <person name="Sun E."/>
            <person name="Svirskas R."/>
            <person name="Tector C."/>
            <person name="Turner R."/>
            <person name="Venter E."/>
            <person name="Wang A.H."/>
            <person name="Wang X."/>
            <person name="Wang Z.-Y."/>
            <person name="Wassarman D.A."/>
            <person name="Weinstock G.M."/>
            <person name="Weissenbach J."/>
            <person name="Williams S.M."/>
            <person name="Woodage T."/>
            <person name="Worley K.C."/>
            <person name="Wu D."/>
            <person name="Yang S."/>
            <person name="Yao Q.A."/>
            <person name="Ye J."/>
            <person name="Yeh R.-F."/>
            <person name="Zaveri J.S."/>
            <person name="Zhan M."/>
            <person name="Zhang G."/>
            <person name="Zhao Q."/>
            <person name="Zheng L."/>
            <person name="Zheng X.H."/>
            <person name="Zhong F.N."/>
            <person name="Zhong W."/>
            <person name="Zhou X."/>
            <person name="Zhu S.C."/>
            <person name="Zhu X."/>
            <person name="Smith H.O."/>
            <person name="Gibbs R.A."/>
            <person name="Myers E.W."/>
            <person name="Rubin G.M."/>
            <person name="Venter J.C."/>
        </authorList>
    </citation>
    <scope>NUCLEOTIDE SEQUENCE [LARGE SCALE GENOMIC DNA]</scope>
    <source>
        <strain>Berkeley</strain>
    </source>
</reference>
<reference key="4">
    <citation type="journal article" date="2002" name="Genome Biol.">
        <title>Annotation of the Drosophila melanogaster euchromatic genome: a systematic review.</title>
        <authorList>
            <person name="Misra S."/>
            <person name="Crosby M.A."/>
            <person name="Mungall C.J."/>
            <person name="Matthews B.B."/>
            <person name="Campbell K.S."/>
            <person name="Hradecky P."/>
            <person name="Huang Y."/>
            <person name="Kaminker J.S."/>
            <person name="Millburn G.H."/>
            <person name="Prochnik S.E."/>
            <person name="Smith C.D."/>
            <person name="Tupy J.L."/>
            <person name="Whitfield E.J."/>
            <person name="Bayraktaroglu L."/>
            <person name="Berman B.P."/>
            <person name="Bettencourt B.R."/>
            <person name="Celniker S.E."/>
            <person name="de Grey A.D.N.J."/>
            <person name="Drysdale R.A."/>
            <person name="Harris N.L."/>
            <person name="Richter J."/>
            <person name="Russo S."/>
            <person name="Schroeder A.J."/>
            <person name="Shu S.Q."/>
            <person name="Stapleton M."/>
            <person name="Yamada C."/>
            <person name="Ashburner M."/>
            <person name="Gelbart W.M."/>
            <person name="Rubin G.M."/>
            <person name="Lewis S.E."/>
        </authorList>
    </citation>
    <scope>GENOME REANNOTATION</scope>
    <source>
        <strain>Berkeley</strain>
    </source>
</reference>
<evidence type="ECO:0000250" key="1"/>
<evidence type="ECO:0000255" key="2">
    <source>
        <dbReference type="PROSITE-ProRule" id="PRU00520"/>
    </source>
</evidence>
<evidence type="ECO:0000256" key="3">
    <source>
        <dbReference type="SAM" id="MobiDB-lite"/>
    </source>
</evidence>
<evidence type="ECO:0000269" key="4">
    <source>
    </source>
</evidence>
<evidence type="ECO:0000305" key="5"/>
<sequence length="120" mass="13697">MATHNVHSCEFEVFGRVQGVNFRRHALRKAKTLGLRGWCMNSSRGTVKGYIEGRPAEMDVMKEWLRTTGSPLSSIEKVEFSSQRERDRYGYANFHIKPDPHENRPVHEGLGSSSSHHDSN</sequence>
<feature type="initiator methionine" description="Removed" evidence="1">
    <location>
        <position position="1"/>
    </location>
</feature>
<feature type="chain" id="PRO_0000158550" description="Acylphosphatase-1">
    <location>
        <begin position="2"/>
        <end position="120"/>
    </location>
</feature>
<feature type="domain" description="Acylphosphatase-like" evidence="2">
    <location>
        <begin position="8"/>
        <end position="98"/>
    </location>
</feature>
<feature type="region of interest" description="Disordered" evidence="3">
    <location>
        <begin position="91"/>
        <end position="120"/>
    </location>
</feature>
<feature type="compositionally biased region" description="Basic and acidic residues" evidence="3">
    <location>
        <begin position="96"/>
        <end position="107"/>
    </location>
</feature>
<feature type="active site" evidence="2">
    <location>
        <position position="23"/>
    </location>
</feature>
<feature type="active site" evidence="2">
    <location>
        <position position="41"/>
    </location>
</feature>
<feature type="modified residue" description="N-acetylalanine" evidence="1">
    <location>
        <position position="2"/>
    </location>
</feature>
<proteinExistence type="evidence at protein level"/>
<dbReference type="EC" id="3.6.1.7" evidence="4"/>
<dbReference type="EMBL" id="AJ243543">
    <property type="protein sequence ID" value="CAB48386.1"/>
    <property type="molecule type" value="mRNA"/>
</dbReference>
<dbReference type="EMBL" id="AE014134">
    <property type="protein sequence ID" value="AAF53355.1"/>
    <property type="molecule type" value="Genomic_DNA"/>
</dbReference>
<dbReference type="RefSeq" id="NP_001285916.1">
    <property type="nucleotide sequence ID" value="NM_001298987.1"/>
</dbReference>
<dbReference type="RefSeq" id="NP_523563.1">
    <property type="nucleotide sequence ID" value="NM_078839.3"/>
</dbReference>
<dbReference type="SMR" id="P56544"/>
<dbReference type="BioGRID" id="60837">
    <property type="interactions" value="1"/>
</dbReference>
<dbReference type="DIP" id="DIP-22487N"/>
<dbReference type="FunCoup" id="P56544">
    <property type="interactions" value="48"/>
</dbReference>
<dbReference type="IntAct" id="P56544">
    <property type="interactions" value="1"/>
</dbReference>
<dbReference type="STRING" id="7227.FBpp0310260"/>
<dbReference type="PaxDb" id="7227-FBpp0080132"/>
<dbReference type="DNASU" id="34807"/>
<dbReference type="EnsemblMetazoa" id="FBtr0080555">
    <property type="protein sequence ID" value="FBpp0080132"/>
    <property type="gene ID" value="FBgn0025115"/>
</dbReference>
<dbReference type="EnsemblMetazoa" id="FBtr0343668">
    <property type="protein sequence ID" value="FBpp0310260"/>
    <property type="gene ID" value="FBgn0025115"/>
</dbReference>
<dbReference type="GeneID" id="34807"/>
<dbReference type="KEGG" id="dme:Dmel_CG16870"/>
<dbReference type="UCSC" id="CG16870-RA">
    <property type="organism name" value="d. melanogaster"/>
</dbReference>
<dbReference type="AGR" id="FB:FBgn0025115"/>
<dbReference type="CTD" id="34807"/>
<dbReference type="FlyBase" id="FBgn0025115">
    <property type="gene designation" value="Acyp"/>
</dbReference>
<dbReference type="VEuPathDB" id="VectorBase:FBgn0025115"/>
<dbReference type="eggNOG" id="KOG3360">
    <property type="taxonomic scope" value="Eukaryota"/>
</dbReference>
<dbReference type="HOGENOM" id="CLU_141932_0_1_1"/>
<dbReference type="InParanoid" id="P56544"/>
<dbReference type="OMA" id="HAIMAEN"/>
<dbReference type="OrthoDB" id="7961613at2759"/>
<dbReference type="PhylomeDB" id="P56544"/>
<dbReference type="SABIO-RK" id="P56544"/>
<dbReference type="BioGRID-ORCS" id="34807">
    <property type="hits" value="0 hits in 3 CRISPR screens"/>
</dbReference>
<dbReference type="GenomeRNAi" id="34807"/>
<dbReference type="PRO" id="PR:P56544"/>
<dbReference type="Proteomes" id="UP000000803">
    <property type="component" value="Chromosome 2L"/>
</dbReference>
<dbReference type="Bgee" id="FBgn0025115">
    <property type="expression patterns" value="Expressed in early-mid elongation-stage spermatid (Drosophila) in testis and 19 other cell types or tissues"/>
</dbReference>
<dbReference type="ExpressionAtlas" id="P56544">
    <property type="expression patterns" value="baseline and differential"/>
</dbReference>
<dbReference type="GO" id="GO:0005737">
    <property type="term" value="C:cytoplasm"/>
    <property type="evidence" value="ECO:0007669"/>
    <property type="project" value="UniProtKB-SubCell"/>
</dbReference>
<dbReference type="GO" id="GO:0003998">
    <property type="term" value="F:acylphosphatase activity"/>
    <property type="evidence" value="ECO:0000314"/>
    <property type="project" value="FlyBase"/>
</dbReference>
<dbReference type="FunFam" id="3.30.70.100:FF:000011">
    <property type="entry name" value="Acylphosphatase"/>
    <property type="match status" value="1"/>
</dbReference>
<dbReference type="Gene3D" id="3.30.70.100">
    <property type="match status" value="1"/>
</dbReference>
<dbReference type="InterPro" id="IPR020456">
    <property type="entry name" value="Acylphosphatase"/>
</dbReference>
<dbReference type="InterPro" id="IPR001792">
    <property type="entry name" value="Acylphosphatase-like_dom"/>
</dbReference>
<dbReference type="InterPro" id="IPR036046">
    <property type="entry name" value="Acylphosphatase-like_dom_sf"/>
</dbReference>
<dbReference type="InterPro" id="IPR017968">
    <property type="entry name" value="Acylphosphatase_CS"/>
</dbReference>
<dbReference type="PANTHER" id="PTHR10029">
    <property type="entry name" value="ACYLPHOSPHATASE"/>
    <property type="match status" value="1"/>
</dbReference>
<dbReference type="PANTHER" id="PTHR10029:SF3">
    <property type="entry name" value="ACYLPHOSPHATASE-RELATED"/>
    <property type="match status" value="1"/>
</dbReference>
<dbReference type="Pfam" id="PF00708">
    <property type="entry name" value="Acylphosphatase"/>
    <property type="match status" value="1"/>
</dbReference>
<dbReference type="PRINTS" id="PR00112">
    <property type="entry name" value="ACYLPHPHTASE"/>
</dbReference>
<dbReference type="SUPFAM" id="SSF54975">
    <property type="entry name" value="Acylphosphatase/BLUF domain-like"/>
    <property type="match status" value="1"/>
</dbReference>
<dbReference type="PROSITE" id="PS00150">
    <property type="entry name" value="ACYLPHOSPHATASE_1"/>
    <property type="match status" value="1"/>
</dbReference>
<dbReference type="PROSITE" id="PS00151">
    <property type="entry name" value="ACYLPHOSPHATASE_2"/>
    <property type="match status" value="1"/>
</dbReference>
<dbReference type="PROSITE" id="PS51160">
    <property type="entry name" value="ACYLPHOSPHATASE_3"/>
    <property type="match status" value="1"/>
</dbReference>
<gene>
    <name type="primary">Acyp</name>
    <name type="synonym">AcP</name>
    <name type="ORF">CG16870</name>
</gene>